<name>MATRX_IHNVW</name>
<gene>
    <name type="primary">M</name>
</gene>
<evidence type="ECO:0000250" key="1"/>
<evidence type="ECO:0000305" key="2"/>
<accession>Q82682</accession>
<proteinExistence type="inferred from homology"/>
<organismHost>
    <name type="scientific">Salmo</name>
    <dbReference type="NCBI Taxonomy" id="8028"/>
</organismHost>
<feature type="chain" id="PRO_0000282902" description="Matrix protein">
    <location>
        <begin position="1"/>
        <end position="195"/>
    </location>
</feature>
<organism>
    <name type="scientific">Infectious hematopoietic necrosis virus (strain WRAC)</name>
    <name type="common">IHNV</name>
    <dbReference type="NCBI Taxonomy" id="429314"/>
    <lineage>
        <taxon>Viruses</taxon>
        <taxon>Riboviria</taxon>
        <taxon>Orthornavirae</taxon>
        <taxon>Negarnaviricota</taxon>
        <taxon>Haploviricotina</taxon>
        <taxon>Monjiviricetes</taxon>
        <taxon>Mononegavirales</taxon>
        <taxon>Rhabdoviridae</taxon>
        <taxon>Gammarhabdovirinae</taxon>
        <taxon>Novirhabdovirus</taxon>
        <taxon>Novirhabdovirus salmonid</taxon>
    </lineage>
</organism>
<protein>
    <recommendedName>
        <fullName>Matrix protein</fullName>
    </recommendedName>
    <alternativeName>
        <fullName>Protein M2</fullName>
    </alternativeName>
</protein>
<reference key="1">
    <citation type="journal article" date="1995" name="Virus Res.">
        <title>The complete genome structure and phylogenetic relationship of infectious hematopoietic necrosis virus.</title>
        <authorList>
            <person name="Morzunov S.P."/>
            <person name="Winton J.R."/>
            <person name="Nichol S.T."/>
        </authorList>
    </citation>
    <scope>NUCLEOTIDE SEQUENCE [GENOMIC RNA]</scope>
</reference>
<sequence length="195" mass="21838">MSIFKRAKKTVLIPPPHLLSGDEERVTILSAEGEIKVTGRRPTTLEEKIYYSMNLAAAIVGGDLHPSFKSMTYLFQKEMEFGSTQEKVNFGSRKPAPQTTYQVTKAREVYLQTQPLEKKIPMQTYSVSTEGATITFTGRFLFSSSHVGCDDNRTKLAGLDGFTTSNSYQRVKDYYAQETALALTFAAPEKRGKEK</sequence>
<dbReference type="EMBL" id="L40883">
    <property type="protein sequence ID" value="AAC42152.1"/>
    <property type="molecule type" value="Genomic_RNA"/>
</dbReference>
<dbReference type="KEGG" id="vg:1489847"/>
<dbReference type="Proteomes" id="UP000007212">
    <property type="component" value="Segment"/>
</dbReference>
<dbReference type="GO" id="GO:0030430">
    <property type="term" value="C:host cell cytoplasm"/>
    <property type="evidence" value="ECO:0007669"/>
    <property type="project" value="UniProtKB-SubCell"/>
</dbReference>
<dbReference type="GO" id="GO:0044423">
    <property type="term" value="C:virion component"/>
    <property type="evidence" value="ECO:0007669"/>
    <property type="project" value="UniProtKB-KW"/>
</dbReference>
<dbReference type="GO" id="GO:0039660">
    <property type="term" value="F:structural constituent of virion"/>
    <property type="evidence" value="ECO:0007669"/>
    <property type="project" value="UniProtKB-KW"/>
</dbReference>
<dbReference type="InterPro" id="IPR005060">
    <property type="entry name" value="Rhabdo_matrix"/>
</dbReference>
<dbReference type="Pfam" id="PF03397">
    <property type="entry name" value="Rhabdo_matrix"/>
    <property type="match status" value="1"/>
</dbReference>
<comment type="function">
    <text evidence="1">The M protein has a crucial role in virus assembly and interacts with the RNP complex as well as with the viral membrane.</text>
</comment>
<comment type="subunit">
    <text evidence="1">Homomultimer.</text>
</comment>
<comment type="subcellular location">
    <subcellularLocation>
        <location evidence="2">Virion</location>
    </subcellularLocation>
    <subcellularLocation>
        <location evidence="1">Host cytoplasm</location>
    </subcellularLocation>
    <text evidence="1">During bud formation, associates at the inner side of the plasma membrane of infected cells.</text>
</comment>
<comment type="similarity">
    <text evidence="2">Belongs to the novirhabdovirus matrix protein family.</text>
</comment>
<keyword id="KW-1035">Host cytoplasm</keyword>
<keyword id="KW-1185">Reference proteome</keyword>
<keyword id="KW-0468">Viral matrix protein</keyword>
<keyword id="KW-0946">Virion</keyword>